<feature type="chain" id="PRO_0000458192" description="Peptide Hact-4">
    <location>
        <begin position="1"/>
        <end position="44"/>
    </location>
</feature>
<feature type="disulfide bond" evidence="1 5">
    <location>
        <begin position="8"/>
        <end position="42"/>
    </location>
</feature>
<feature type="disulfide bond" evidence="1 5">
    <location>
        <begin position="15"/>
        <end position="34"/>
    </location>
</feature>
<feature type="disulfide bond" evidence="1 5">
    <location>
        <begin position="20"/>
        <end position="43"/>
    </location>
</feature>
<keyword id="KW-0002">3D-structure</keyword>
<keyword id="KW-0903">Direct protein sequencing</keyword>
<keyword id="KW-1015">Disulfide bond</keyword>
<keyword id="KW-0166">Nematocyst</keyword>
<keyword id="KW-0964">Secreted</keyword>
<sequence length="44" mass="4774">QPRSHVDCPALHGQCQSLPCTYPLVFVGPDPFHCGPYPQFGCCA</sequence>
<name>HACT4_HELAT</name>
<accession>C0HM26</accession>
<comment type="function">
    <text evidence="1">Peptide with unknown function (PubMed:35829679). Does not exhibit antimicrobial activity against Escherichia coli and Staphylococcus aureus (PubMed:35829679). Does not exhibit any effect on human ion channel TRPV1 in a Xenopus laevis oocytes assay (PubMed:35829679).</text>
</comment>
<comment type="subcellular location">
    <subcellularLocation>
        <location evidence="1">Nematocyst</location>
    </subcellularLocation>
    <subcellularLocation>
        <location evidence="3">Secreted</location>
    </subcellularLocation>
</comment>
<comment type="tissue specificity">
    <text evidence="1">Expressed in tentacles.</text>
</comment>
<comment type="mass spectrometry" mass="4751.039" method="MALDI" evidence="1"/>
<dbReference type="PDB" id="7MJ3">
    <property type="method" value="NMR"/>
    <property type="chains" value="A=1-44"/>
</dbReference>
<dbReference type="PDBsum" id="7MJ3"/>
<dbReference type="SMR" id="C0HM26"/>
<dbReference type="GO" id="GO:0005576">
    <property type="term" value="C:extracellular region"/>
    <property type="evidence" value="ECO:0007669"/>
    <property type="project" value="UniProtKB-SubCell"/>
</dbReference>
<dbReference type="GO" id="GO:0042151">
    <property type="term" value="C:nematocyst"/>
    <property type="evidence" value="ECO:0007669"/>
    <property type="project" value="UniProtKB-SubCell"/>
</dbReference>
<protein>
    <recommendedName>
        <fullName evidence="2">Peptide Hact-4</fullName>
    </recommendedName>
</protein>
<evidence type="ECO:0000269" key="1">
    <source>
    </source>
</evidence>
<evidence type="ECO:0000303" key="2">
    <source>
    </source>
</evidence>
<evidence type="ECO:0000305" key="3">
    <source>
    </source>
</evidence>
<evidence type="ECO:0000312" key="4">
    <source>
        <dbReference type="PDB" id="7MJ3"/>
    </source>
</evidence>
<evidence type="ECO:0007744" key="5">
    <source>
        <dbReference type="PDB" id="7MJ3"/>
    </source>
</evidence>
<proteinExistence type="evidence at protein level"/>
<organism>
    <name type="scientific">Heliofungia actiniformis</name>
    <name type="common">Mushroom coral</name>
    <name type="synonym">Fungia actiniformis</name>
    <dbReference type="NCBI Taxonomy" id="75303"/>
    <lineage>
        <taxon>Eukaryota</taxon>
        <taxon>Metazoa</taxon>
        <taxon>Cnidaria</taxon>
        <taxon>Anthozoa</taxon>
        <taxon>Hexacorallia</taxon>
        <taxon>Scleractinia</taxon>
        <taxon>Fungiina</taxon>
        <taxon>Fungiidae</taxon>
        <taxon>Heliofungia</taxon>
    </lineage>
</organism>
<reference evidence="4" key="1">
    <citation type="journal article" date="2022" name="J. Nat. Prod.">
        <title>Newly Discovered Peptides from the Coral Heliofungia actiniformis Show Structural and Functional Diversity.</title>
        <authorList>
            <person name="Schmidt C.A."/>
            <person name="Cooke I."/>
            <person name="Wilson D.T."/>
            <person name="Miller D.J."/>
            <person name="Peigneur S."/>
            <person name="Tytgat J."/>
            <person name="Field M."/>
            <person name="Takjoo R."/>
            <person name="Smout M.J."/>
            <person name="Loukas A."/>
            <person name="Daly N.L."/>
        </authorList>
    </citation>
    <scope>PROTEIN SEQUENCE OF 4-30</scope>
    <scope>STRUCTURE BY NMR</scope>
    <scope>FUNCTION</scope>
    <scope>SUBCELLULAR LOCATION</scope>
    <scope>TISSUE SPECIFICITY</scope>
    <scope>MASS SPECTROMETRY</scope>
    <scope>DISULFIDE BONDS</scope>
</reference>